<comment type="function">
    <text evidence="1">Catalyzes the last two sequential reactions in the de novo biosynthetic pathway for UDP-N-acetylglucosamine (UDP-GlcNAc). The C-terminal domain catalyzes the transfer of acetyl group from acetyl coenzyme A to glucosamine-1-phosphate (GlcN-1-P) to produce N-acetylglucosamine-1-phosphate (GlcNAc-1-P), which is converted into UDP-GlcNAc by the transfer of uridine 5-monophosphate (from uridine 5-triphosphate), a reaction catalyzed by the N-terminal domain.</text>
</comment>
<comment type="catalytic activity">
    <reaction evidence="1">
        <text>alpha-D-glucosamine 1-phosphate + acetyl-CoA = N-acetyl-alpha-D-glucosamine 1-phosphate + CoA + H(+)</text>
        <dbReference type="Rhea" id="RHEA:13725"/>
        <dbReference type="ChEBI" id="CHEBI:15378"/>
        <dbReference type="ChEBI" id="CHEBI:57287"/>
        <dbReference type="ChEBI" id="CHEBI:57288"/>
        <dbReference type="ChEBI" id="CHEBI:57776"/>
        <dbReference type="ChEBI" id="CHEBI:58516"/>
        <dbReference type="EC" id="2.3.1.157"/>
    </reaction>
</comment>
<comment type="catalytic activity">
    <reaction evidence="1">
        <text>N-acetyl-alpha-D-glucosamine 1-phosphate + UTP + H(+) = UDP-N-acetyl-alpha-D-glucosamine + diphosphate</text>
        <dbReference type="Rhea" id="RHEA:13509"/>
        <dbReference type="ChEBI" id="CHEBI:15378"/>
        <dbReference type="ChEBI" id="CHEBI:33019"/>
        <dbReference type="ChEBI" id="CHEBI:46398"/>
        <dbReference type="ChEBI" id="CHEBI:57705"/>
        <dbReference type="ChEBI" id="CHEBI:57776"/>
        <dbReference type="EC" id="2.7.7.23"/>
    </reaction>
</comment>
<comment type="cofactor">
    <cofactor evidence="1">
        <name>Mg(2+)</name>
        <dbReference type="ChEBI" id="CHEBI:18420"/>
    </cofactor>
    <text evidence="1">Binds 1 Mg(2+) ion per subunit.</text>
</comment>
<comment type="pathway">
    <text evidence="1">Nucleotide-sugar biosynthesis; UDP-N-acetyl-alpha-D-glucosamine biosynthesis; N-acetyl-alpha-D-glucosamine 1-phosphate from alpha-D-glucosamine 6-phosphate (route II): step 2/2.</text>
</comment>
<comment type="pathway">
    <text evidence="1">Nucleotide-sugar biosynthesis; UDP-N-acetyl-alpha-D-glucosamine biosynthesis; UDP-N-acetyl-alpha-D-glucosamine from N-acetyl-alpha-D-glucosamine 1-phosphate: step 1/1.</text>
</comment>
<comment type="pathway">
    <text evidence="1">Bacterial outer membrane biogenesis; LPS lipid A biosynthesis.</text>
</comment>
<comment type="subunit">
    <text evidence="1">Homotrimer.</text>
</comment>
<comment type="subcellular location">
    <subcellularLocation>
        <location evidence="1">Cytoplasm</location>
    </subcellularLocation>
</comment>
<comment type="similarity">
    <text evidence="1">In the N-terminal section; belongs to the N-acetylglucosamine-1-phosphate uridyltransferase family.</text>
</comment>
<comment type="similarity">
    <text evidence="1">In the C-terminal section; belongs to the transferase hexapeptide repeat family.</text>
</comment>
<sequence>MSEVDVVILAAGKGSRMKDDLSKPLHKVAGLPMLEWICRAVRKFNPKNIIAVQGADEDFSSYVDETVVQKEQLGSADALRCAFPKIDAEKLIVINADMPLMTENDLVDLVEKGEGFDAALLTADLKKPFGYGRVIPVGERNVVEQIVEERDATADQKKLHLVNAGVYLFRADYIKRAINNVTTDNSQSEYYLTDALPGAKIVQVADWHDILGVNTQQQLAAVSKIARKRINDQIMANGVTMIDPLTTYIDANVLVGTGTIIKPGTVIEHDSVIGAENEIGPYAHLREKTVTGIDVHIGNFVETKNAKIGDHTHIGHLTYVGDAEVGQAVNIGAGTIFVNYDGKNKHMTKVGDRAFIGSNSKLVAPVEIASEAITAAGSTITDNVDQHAMGIARQRQTNKSDFWQRMPHEDFATEYDAKHDQRDDQP</sequence>
<evidence type="ECO:0000255" key="1">
    <source>
        <dbReference type="HAMAP-Rule" id="MF_01631"/>
    </source>
</evidence>
<keyword id="KW-0012">Acyltransferase</keyword>
<keyword id="KW-0133">Cell shape</keyword>
<keyword id="KW-0961">Cell wall biogenesis/degradation</keyword>
<keyword id="KW-0963">Cytoplasm</keyword>
<keyword id="KW-0460">Magnesium</keyword>
<keyword id="KW-0479">Metal-binding</keyword>
<keyword id="KW-0511">Multifunctional enzyme</keyword>
<keyword id="KW-0548">Nucleotidyltransferase</keyword>
<keyword id="KW-0573">Peptidoglycan synthesis</keyword>
<keyword id="KW-1185">Reference proteome</keyword>
<keyword id="KW-0677">Repeat</keyword>
<keyword id="KW-0808">Transferase</keyword>
<gene>
    <name evidence="1" type="primary">glmU</name>
    <name type="ordered locus">OEOE_1542</name>
</gene>
<proteinExistence type="inferred from homology"/>
<organism>
    <name type="scientific">Oenococcus oeni (strain ATCC BAA-331 / PSU-1)</name>
    <dbReference type="NCBI Taxonomy" id="203123"/>
    <lineage>
        <taxon>Bacteria</taxon>
        <taxon>Bacillati</taxon>
        <taxon>Bacillota</taxon>
        <taxon>Bacilli</taxon>
        <taxon>Lactobacillales</taxon>
        <taxon>Lactobacillaceae</taxon>
        <taxon>Oenococcus</taxon>
    </lineage>
</organism>
<accession>Q04DS4</accession>
<feature type="chain" id="PRO_1000069734" description="Bifunctional protein GlmU">
    <location>
        <begin position="1"/>
        <end position="426"/>
    </location>
</feature>
<feature type="region of interest" description="Pyrophosphorylase" evidence="1">
    <location>
        <begin position="1"/>
        <end position="216"/>
    </location>
</feature>
<feature type="region of interest" description="Linker" evidence="1">
    <location>
        <begin position="217"/>
        <end position="237"/>
    </location>
</feature>
<feature type="region of interest" description="N-acetyltransferase" evidence="1">
    <location>
        <begin position="238"/>
        <end position="426"/>
    </location>
</feature>
<feature type="active site" description="Proton acceptor" evidence="1">
    <location>
        <position position="316"/>
    </location>
</feature>
<feature type="binding site" evidence="1">
    <location>
        <begin position="9"/>
        <end position="12"/>
    </location>
    <ligand>
        <name>UDP-N-acetyl-alpha-D-glucosamine</name>
        <dbReference type="ChEBI" id="CHEBI:57705"/>
    </ligand>
</feature>
<feature type="binding site" evidence="1">
    <location>
        <position position="23"/>
    </location>
    <ligand>
        <name>UDP-N-acetyl-alpha-D-glucosamine</name>
        <dbReference type="ChEBI" id="CHEBI:57705"/>
    </ligand>
</feature>
<feature type="binding site" evidence="1">
    <location>
        <position position="69"/>
    </location>
    <ligand>
        <name>UDP-N-acetyl-alpha-D-glucosamine</name>
        <dbReference type="ChEBI" id="CHEBI:57705"/>
    </ligand>
</feature>
<feature type="binding site" evidence="1">
    <location>
        <position position="97"/>
    </location>
    <ligand>
        <name>Mg(2+)</name>
        <dbReference type="ChEBI" id="CHEBI:18420"/>
    </ligand>
</feature>
<feature type="binding site" evidence="1">
    <location>
        <position position="132"/>
    </location>
    <ligand>
        <name>UDP-N-acetyl-alpha-D-glucosamine</name>
        <dbReference type="ChEBI" id="CHEBI:57705"/>
    </ligand>
</feature>
<feature type="binding site" evidence="1">
    <location>
        <position position="148"/>
    </location>
    <ligand>
        <name>UDP-N-acetyl-alpha-D-glucosamine</name>
        <dbReference type="ChEBI" id="CHEBI:57705"/>
    </ligand>
</feature>
<feature type="binding site" evidence="1">
    <location>
        <position position="163"/>
    </location>
    <ligand>
        <name>UDP-N-acetyl-alpha-D-glucosamine</name>
        <dbReference type="ChEBI" id="CHEBI:57705"/>
    </ligand>
</feature>
<feature type="binding site" evidence="1">
    <location>
        <position position="214"/>
    </location>
    <ligand>
        <name>Mg(2+)</name>
        <dbReference type="ChEBI" id="CHEBI:18420"/>
    </ligand>
</feature>
<feature type="binding site" evidence="1">
    <location>
        <position position="214"/>
    </location>
    <ligand>
        <name>UDP-N-acetyl-alpha-D-glucosamine</name>
        <dbReference type="ChEBI" id="CHEBI:57705"/>
    </ligand>
</feature>
<feature type="binding site" evidence="1">
    <location>
        <position position="286"/>
    </location>
    <ligand>
        <name>UDP-N-acetyl-alpha-D-glucosamine</name>
        <dbReference type="ChEBI" id="CHEBI:57705"/>
    </ligand>
</feature>
<feature type="binding site" evidence="1">
    <location>
        <position position="304"/>
    </location>
    <ligand>
        <name>UDP-N-acetyl-alpha-D-glucosamine</name>
        <dbReference type="ChEBI" id="CHEBI:57705"/>
    </ligand>
</feature>
<feature type="binding site" evidence="1">
    <location>
        <position position="319"/>
    </location>
    <ligand>
        <name>UDP-N-acetyl-alpha-D-glucosamine</name>
        <dbReference type="ChEBI" id="CHEBI:57705"/>
    </ligand>
</feature>
<feature type="binding site" evidence="1">
    <location>
        <position position="330"/>
    </location>
    <ligand>
        <name>UDP-N-acetyl-alpha-D-glucosamine</name>
        <dbReference type="ChEBI" id="CHEBI:57705"/>
    </ligand>
</feature>
<feature type="binding site" evidence="1">
    <location>
        <position position="333"/>
    </location>
    <ligand>
        <name>acetyl-CoA</name>
        <dbReference type="ChEBI" id="CHEBI:57288"/>
    </ligand>
</feature>
<feature type="binding site" evidence="1">
    <location>
        <begin position="339"/>
        <end position="340"/>
    </location>
    <ligand>
        <name>acetyl-CoA</name>
        <dbReference type="ChEBI" id="CHEBI:57288"/>
    </ligand>
</feature>
<feature type="binding site" evidence="1">
    <location>
        <position position="358"/>
    </location>
    <ligand>
        <name>acetyl-CoA</name>
        <dbReference type="ChEBI" id="CHEBI:57288"/>
    </ligand>
</feature>
<feature type="binding site" evidence="1">
    <location>
        <position position="376"/>
    </location>
    <ligand>
        <name>acetyl-CoA</name>
        <dbReference type="ChEBI" id="CHEBI:57288"/>
    </ligand>
</feature>
<feature type="binding site" evidence="1">
    <location>
        <position position="393"/>
    </location>
    <ligand>
        <name>acetyl-CoA</name>
        <dbReference type="ChEBI" id="CHEBI:57288"/>
    </ligand>
</feature>
<dbReference type="EC" id="2.7.7.23" evidence="1"/>
<dbReference type="EC" id="2.3.1.157" evidence="1"/>
<dbReference type="EMBL" id="CP000411">
    <property type="protein sequence ID" value="ABJ57398.1"/>
    <property type="molecule type" value="Genomic_DNA"/>
</dbReference>
<dbReference type="RefSeq" id="WP_011677759.1">
    <property type="nucleotide sequence ID" value="NC_008528.1"/>
</dbReference>
<dbReference type="SMR" id="Q04DS4"/>
<dbReference type="STRING" id="203123.OEOE_1542"/>
<dbReference type="KEGG" id="ooe:OEOE_1542"/>
<dbReference type="PATRIC" id="fig|203123.7.peg.1568"/>
<dbReference type="eggNOG" id="COG1207">
    <property type="taxonomic scope" value="Bacteria"/>
</dbReference>
<dbReference type="HOGENOM" id="CLU_029499_15_2_9"/>
<dbReference type="UniPathway" id="UPA00113">
    <property type="reaction ID" value="UER00532"/>
</dbReference>
<dbReference type="UniPathway" id="UPA00113">
    <property type="reaction ID" value="UER00533"/>
</dbReference>
<dbReference type="UniPathway" id="UPA00973"/>
<dbReference type="Proteomes" id="UP000000774">
    <property type="component" value="Chromosome"/>
</dbReference>
<dbReference type="GO" id="GO:0005737">
    <property type="term" value="C:cytoplasm"/>
    <property type="evidence" value="ECO:0007669"/>
    <property type="project" value="UniProtKB-SubCell"/>
</dbReference>
<dbReference type="GO" id="GO:0016020">
    <property type="term" value="C:membrane"/>
    <property type="evidence" value="ECO:0007669"/>
    <property type="project" value="GOC"/>
</dbReference>
<dbReference type="GO" id="GO:0019134">
    <property type="term" value="F:glucosamine-1-phosphate N-acetyltransferase activity"/>
    <property type="evidence" value="ECO:0007669"/>
    <property type="project" value="UniProtKB-UniRule"/>
</dbReference>
<dbReference type="GO" id="GO:0000287">
    <property type="term" value="F:magnesium ion binding"/>
    <property type="evidence" value="ECO:0007669"/>
    <property type="project" value="UniProtKB-UniRule"/>
</dbReference>
<dbReference type="GO" id="GO:0003977">
    <property type="term" value="F:UDP-N-acetylglucosamine diphosphorylase activity"/>
    <property type="evidence" value="ECO:0007669"/>
    <property type="project" value="UniProtKB-UniRule"/>
</dbReference>
<dbReference type="GO" id="GO:0000902">
    <property type="term" value="P:cell morphogenesis"/>
    <property type="evidence" value="ECO:0007669"/>
    <property type="project" value="UniProtKB-UniRule"/>
</dbReference>
<dbReference type="GO" id="GO:0071555">
    <property type="term" value="P:cell wall organization"/>
    <property type="evidence" value="ECO:0007669"/>
    <property type="project" value="UniProtKB-KW"/>
</dbReference>
<dbReference type="GO" id="GO:0009245">
    <property type="term" value="P:lipid A biosynthetic process"/>
    <property type="evidence" value="ECO:0007669"/>
    <property type="project" value="UniProtKB-UniRule"/>
</dbReference>
<dbReference type="GO" id="GO:0009252">
    <property type="term" value="P:peptidoglycan biosynthetic process"/>
    <property type="evidence" value="ECO:0007669"/>
    <property type="project" value="UniProtKB-UniRule"/>
</dbReference>
<dbReference type="GO" id="GO:0008360">
    <property type="term" value="P:regulation of cell shape"/>
    <property type="evidence" value="ECO:0007669"/>
    <property type="project" value="UniProtKB-KW"/>
</dbReference>
<dbReference type="GO" id="GO:0006048">
    <property type="term" value="P:UDP-N-acetylglucosamine biosynthetic process"/>
    <property type="evidence" value="ECO:0007669"/>
    <property type="project" value="UniProtKB-UniPathway"/>
</dbReference>
<dbReference type="CDD" id="cd02540">
    <property type="entry name" value="GT2_GlmU_N_bac"/>
    <property type="match status" value="1"/>
</dbReference>
<dbReference type="Gene3D" id="2.160.10.10">
    <property type="entry name" value="Hexapeptide repeat proteins"/>
    <property type="match status" value="1"/>
</dbReference>
<dbReference type="Gene3D" id="3.90.550.10">
    <property type="entry name" value="Spore Coat Polysaccharide Biosynthesis Protein SpsA, Chain A"/>
    <property type="match status" value="1"/>
</dbReference>
<dbReference type="HAMAP" id="MF_01631">
    <property type="entry name" value="GlmU"/>
    <property type="match status" value="1"/>
</dbReference>
<dbReference type="InterPro" id="IPR005882">
    <property type="entry name" value="Bifunctional_GlmU"/>
</dbReference>
<dbReference type="InterPro" id="IPR050065">
    <property type="entry name" value="GlmU-like"/>
</dbReference>
<dbReference type="InterPro" id="IPR001451">
    <property type="entry name" value="Hexapep"/>
</dbReference>
<dbReference type="InterPro" id="IPR025877">
    <property type="entry name" value="MobA-like_NTP_Trfase"/>
</dbReference>
<dbReference type="InterPro" id="IPR029044">
    <property type="entry name" value="Nucleotide-diphossugar_trans"/>
</dbReference>
<dbReference type="InterPro" id="IPR011004">
    <property type="entry name" value="Trimer_LpxA-like_sf"/>
</dbReference>
<dbReference type="PANTHER" id="PTHR43584:SF3">
    <property type="entry name" value="BIFUNCTIONAL PROTEIN GLMU"/>
    <property type="match status" value="1"/>
</dbReference>
<dbReference type="PANTHER" id="PTHR43584">
    <property type="entry name" value="NUCLEOTIDYL TRANSFERASE"/>
    <property type="match status" value="1"/>
</dbReference>
<dbReference type="Pfam" id="PF14602">
    <property type="entry name" value="Hexapep_2"/>
    <property type="match status" value="1"/>
</dbReference>
<dbReference type="Pfam" id="PF12804">
    <property type="entry name" value="NTP_transf_3"/>
    <property type="match status" value="1"/>
</dbReference>
<dbReference type="SUPFAM" id="SSF53448">
    <property type="entry name" value="Nucleotide-diphospho-sugar transferases"/>
    <property type="match status" value="1"/>
</dbReference>
<dbReference type="SUPFAM" id="SSF51161">
    <property type="entry name" value="Trimeric LpxA-like enzymes"/>
    <property type="match status" value="1"/>
</dbReference>
<name>GLMU_OENOB</name>
<reference key="1">
    <citation type="journal article" date="2006" name="Proc. Natl. Acad. Sci. U.S.A.">
        <title>Comparative genomics of the lactic acid bacteria.</title>
        <authorList>
            <person name="Makarova K.S."/>
            <person name="Slesarev A."/>
            <person name="Wolf Y.I."/>
            <person name="Sorokin A."/>
            <person name="Mirkin B."/>
            <person name="Koonin E.V."/>
            <person name="Pavlov A."/>
            <person name="Pavlova N."/>
            <person name="Karamychev V."/>
            <person name="Polouchine N."/>
            <person name="Shakhova V."/>
            <person name="Grigoriev I."/>
            <person name="Lou Y."/>
            <person name="Rohksar D."/>
            <person name="Lucas S."/>
            <person name="Huang K."/>
            <person name="Goodstein D.M."/>
            <person name="Hawkins T."/>
            <person name="Plengvidhya V."/>
            <person name="Welker D."/>
            <person name="Hughes J."/>
            <person name="Goh Y."/>
            <person name="Benson A."/>
            <person name="Baldwin K."/>
            <person name="Lee J.-H."/>
            <person name="Diaz-Muniz I."/>
            <person name="Dosti B."/>
            <person name="Smeianov V."/>
            <person name="Wechter W."/>
            <person name="Barabote R."/>
            <person name="Lorca G."/>
            <person name="Altermann E."/>
            <person name="Barrangou R."/>
            <person name="Ganesan B."/>
            <person name="Xie Y."/>
            <person name="Rawsthorne H."/>
            <person name="Tamir D."/>
            <person name="Parker C."/>
            <person name="Breidt F."/>
            <person name="Broadbent J.R."/>
            <person name="Hutkins R."/>
            <person name="O'Sullivan D."/>
            <person name="Steele J."/>
            <person name="Unlu G."/>
            <person name="Saier M.H. Jr."/>
            <person name="Klaenhammer T."/>
            <person name="Richardson P."/>
            <person name="Kozyavkin S."/>
            <person name="Weimer B.C."/>
            <person name="Mills D.A."/>
        </authorList>
    </citation>
    <scope>NUCLEOTIDE SEQUENCE [LARGE SCALE GENOMIC DNA]</scope>
    <source>
        <strain>ATCC BAA-331 / PSU-1</strain>
    </source>
</reference>
<protein>
    <recommendedName>
        <fullName evidence="1">Bifunctional protein GlmU</fullName>
    </recommendedName>
    <domain>
        <recommendedName>
            <fullName evidence="1">UDP-N-acetylglucosamine pyrophosphorylase</fullName>
            <ecNumber evidence="1">2.7.7.23</ecNumber>
        </recommendedName>
        <alternativeName>
            <fullName evidence="1">N-acetylglucosamine-1-phosphate uridyltransferase</fullName>
        </alternativeName>
    </domain>
    <domain>
        <recommendedName>
            <fullName evidence="1">Glucosamine-1-phosphate N-acetyltransferase</fullName>
            <ecNumber evidence="1">2.3.1.157</ecNumber>
        </recommendedName>
    </domain>
</protein>